<comment type="function">
    <text evidence="4 5 6 7">Involved in protein assisted folding.</text>
</comment>
<comment type="subunit">
    <text evidence="4 5 7">Part of the Cpn60 complex composed of 7 alpha and 7 beta subunits. Can also form a complex composed of 14 beta subunits only. Both complexes show ATPase activity. The Cpn60 complex interacts with the Cpn10 complex. Interacts with RAB during heat stress.</text>
</comment>
<comment type="subcellular location">
    <subcellularLocation>
        <location evidence="6">Plastid</location>
        <location evidence="6">Chloroplast stroma</location>
    </subcellularLocation>
</comment>
<comment type="induction">
    <text evidence="3">Up-regulated by light.</text>
</comment>
<comment type="disruption phenotype">
    <text evidence="6">No visible phenotype; due to redundancy with CPN60B1. Cpn60B1 and cpn60B2 double mutant produces small albino seedlings.</text>
</comment>
<comment type="miscellaneous">
    <text>Assisted protein folding requires ATP hydrolysis, but not K(+) ions.</text>
</comment>
<comment type="similarity">
    <text evidence="8">Belongs to the chaperonin (HSP60) family.</text>
</comment>
<feature type="transit peptide" description="Chloroplast" evidence="4">
    <location>
        <begin position="1"/>
        <end position="50"/>
    </location>
</feature>
<feature type="chain" id="PRO_0000413684" description="Chaperonin 60 subunit beta 2, chloroplastic">
    <location>
        <begin position="51"/>
        <end position="596"/>
    </location>
</feature>
<feature type="coiled-coil region" evidence="2">
    <location>
        <begin position="388"/>
        <end position="489"/>
    </location>
</feature>
<feature type="modified residue" description="Phosphoserine" evidence="1">
    <location>
        <position position="97"/>
    </location>
</feature>
<feature type="modified residue" description="Phosphoserine" evidence="9">
    <location>
        <position position="474"/>
    </location>
</feature>
<protein>
    <recommendedName>
        <fullName>Chaperonin 60 subunit beta 2, chloroplastic</fullName>
        <shortName>CPN-60 beta 2</shortName>
    </recommendedName>
</protein>
<organism>
    <name type="scientific">Arabidopsis thaliana</name>
    <name type="common">Mouse-ear cress</name>
    <dbReference type="NCBI Taxonomy" id="3702"/>
    <lineage>
        <taxon>Eukaryota</taxon>
        <taxon>Viridiplantae</taxon>
        <taxon>Streptophyta</taxon>
        <taxon>Embryophyta</taxon>
        <taxon>Tracheophyta</taxon>
        <taxon>Spermatophyta</taxon>
        <taxon>Magnoliopsida</taxon>
        <taxon>eudicotyledons</taxon>
        <taxon>Gunneridae</taxon>
        <taxon>Pentapetalae</taxon>
        <taxon>rosids</taxon>
        <taxon>malvids</taxon>
        <taxon>Brassicales</taxon>
        <taxon>Brassicaceae</taxon>
        <taxon>Camelineae</taxon>
        <taxon>Arabidopsis</taxon>
    </lineage>
</organism>
<dbReference type="EMBL" id="AP000603">
    <property type="protein sequence ID" value="BAB01754.1"/>
    <property type="molecule type" value="Genomic_DNA"/>
</dbReference>
<dbReference type="EMBL" id="CP002686">
    <property type="protein sequence ID" value="AEE75362.1"/>
    <property type="molecule type" value="Genomic_DNA"/>
</dbReference>
<dbReference type="PIR" id="PS0374">
    <property type="entry name" value="PS0374"/>
</dbReference>
<dbReference type="SMR" id="Q9LJE4"/>
<dbReference type="BioGRID" id="5883">
    <property type="interactions" value="27"/>
</dbReference>
<dbReference type="FunCoup" id="Q9LJE4">
    <property type="interactions" value="499"/>
</dbReference>
<dbReference type="IntAct" id="Q9LJE4">
    <property type="interactions" value="2"/>
</dbReference>
<dbReference type="MINT" id="Q9LJE4"/>
<dbReference type="STRING" id="3702.Q9LJE4"/>
<dbReference type="iPTMnet" id="Q9LJE4"/>
<dbReference type="MetOSite" id="Q9LJE4"/>
<dbReference type="PaxDb" id="3702-AT3G13470.1"/>
<dbReference type="ProteomicsDB" id="224488"/>
<dbReference type="EnsemblPlants" id="AT3G13470.1">
    <property type="protein sequence ID" value="AT3G13470.1"/>
    <property type="gene ID" value="AT3G13470"/>
</dbReference>
<dbReference type="Gramene" id="AT3G13470.1">
    <property type="protein sequence ID" value="AT3G13470.1"/>
    <property type="gene ID" value="AT3G13470"/>
</dbReference>
<dbReference type="KEGG" id="ath:AT3G13470"/>
<dbReference type="Araport" id="AT3G13470"/>
<dbReference type="TAIR" id="AT3G13470">
    <property type="gene designation" value="CPN60BETA2"/>
</dbReference>
<dbReference type="eggNOG" id="KOG0356">
    <property type="taxonomic scope" value="Eukaryota"/>
</dbReference>
<dbReference type="HOGENOM" id="CLU_016503_4_1_1"/>
<dbReference type="InParanoid" id="Q9LJE4"/>
<dbReference type="OMA" id="NPEVGNM"/>
<dbReference type="PhylomeDB" id="Q9LJE4"/>
<dbReference type="CD-CODE" id="4299E36E">
    <property type="entry name" value="Nucleolus"/>
</dbReference>
<dbReference type="PRO" id="PR:Q9LJE4"/>
<dbReference type="Proteomes" id="UP000006548">
    <property type="component" value="Chromosome 3"/>
</dbReference>
<dbReference type="ExpressionAtlas" id="Q9LJE4">
    <property type="expression patterns" value="baseline and differential"/>
</dbReference>
<dbReference type="GO" id="GO:0009507">
    <property type="term" value="C:chloroplast"/>
    <property type="evidence" value="ECO:0007005"/>
    <property type="project" value="TAIR"/>
</dbReference>
<dbReference type="GO" id="GO:0009941">
    <property type="term" value="C:chloroplast envelope"/>
    <property type="evidence" value="ECO:0007005"/>
    <property type="project" value="TAIR"/>
</dbReference>
<dbReference type="GO" id="GO:0009570">
    <property type="term" value="C:chloroplast stroma"/>
    <property type="evidence" value="ECO:0007005"/>
    <property type="project" value="TAIR"/>
</dbReference>
<dbReference type="GO" id="GO:0022626">
    <property type="term" value="C:cytosolic ribosome"/>
    <property type="evidence" value="ECO:0007005"/>
    <property type="project" value="TAIR"/>
</dbReference>
<dbReference type="GO" id="GO:0005739">
    <property type="term" value="C:mitochondrion"/>
    <property type="evidence" value="ECO:0007005"/>
    <property type="project" value="TAIR"/>
</dbReference>
<dbReference type="GO" id="GO:0005730">
    <property type="term" value="C:nucleolus"/>
    <property type="evidence" value="ECO:0007005"/>
    <property type="project" value="TAIR"/>
</dbReference>
<dbReference type="GO" id="GO:0005634">
    <property type="term" value="C:nucleus"/>
    <property type="evidence" value="ECO:0007005"/>
    <property type="project" value="TAIR"/>
</dbReference>
<dbReference type="GO" id="GO:0005524">
    <property type="term" value="F:ATP binding"/>
    <property type="evidence" value="ECO:0007669"/>
    <property type="project" value="UniProtKB-KW"/>
</dbReference>
<dbReference type="GO" id="GO:0140662">
    <property type="term" value="F:ATP-dependent protein folding chaperone"/>
    <property type="evidence" value="ECO:0007669"/>
    <property type="project" value="InterPro"/>
</dbReference>
<dbReference type="GO" id="GO:0003729">
    <property type="term" value="F:mRNA binding"/>
    <property type="evidence" value="ECO:0000314"/>
    <property type="project" value="TAIR"/>
</dbReference>
<dbReference type="GO" id="GO:0042026">
    <property type="term" value="P:protein refolding"/>
    <property type="evidence" value="ECO:0007669"/>
    <property type="project" value="InterPro"/>
</dbReference>
<dbReference type="CDD" id="cd03344">
    <property type="entry name" value="GroEL"/>
    <property type="match status" value="1"/>
</dbReference>
<dbReference type="FunFam" id="3.50.7.10:FF:000001">
    <property type="entry name" value="60 kDa chaperonin"/>
    <property type="match status" value="1"/>
</dbReference>
<dbReference type="Gene3D" id="3.50.7.10">
    <property type="entry name" value="GroEL"/>
    <property type="match status" value="1"/>
</dbReference>
<dbReference type="Gene3D" id="1.10.560.10">
    <property type="entry name" value="GroEL-like equatorial domain"/>
    <property type="match status" value="1"/>
</dbReference>
<dbReference type="Gene3D" id="3.30.260.10">
    <property type="entry name" value="TCP-1-like chaperonin intermediate domain"/>
    <property type="match status" value="1"/>
</dbReference>
<dbReference type="HAMAP" id="MF_00600">
    <property type="entry name" value="CH60"/>
    <property type="match status" value="1"/>
</dbReference>
<dbReference type="InterPro" id="IPR018370">
    <property type="entry name" value="Chaperonin_Cpn60_CS"/>
</dbReference>
<dbReference type="InterPro" id="IPR001844">
    <property type="entry name" value="Cpn60/GroEL"/>
</dbReference>
<dbReference type="InterPro" id="IPR002423">
    <property type="entry name" value="Cpn60/GroEL/TCP-1"/>
</dbReference>
<dbReference type="InterPro" id="IPR027409">
    <property type="entry name" value="GroEL-like_apical_dom_sf"/>
</dbReference>
<dbReference type="InterPro" id="IPR027413">
    <property type="entry name" value="GROEL-like_equatorial_sf"/>
</dbReference>
<dbReference type="InterPro" id="IPR027410">
    <property type="entry name" value="TCP-1-like_intermed_sf"/>
</dbReference>
<dbReference type="NCBIfam" id="TIGR02348">
    <property type="entry name" value="GroEL"/>
    <property type="match status" value="1"/>
</dbReference>
<dbReference type="NCBIfam" id="NF000592">
    <property type="entry name" value="PRK00013.1"/>
    <property type="match status" value="1"/>
</dbReference>
<dbReference type="NCBIfam" id="NF009487">
    <property type="entry name" value="PRK12849.1"/>
    <property type="match status" value="1"/>
</dbReference>
<dbReference type="NCBIfam" id="NF009488">
    <property type="entry name" value="PRK12850.1"/>
    <property type="match status" value="1"/>
</dbReference>
<dbReference type="NCBIfam" id="NF009489">
    <property type="entry name" value="PRK12851.1"/>
    <property type="match status" value="1"/>
</dbReference>
<dbReference type="PANTHER" id="PTHR45633">
    <property type="entry name" value="60 KDA HEAT SHOCK PROTEIN, MITOCHONDRIAL"/>
    <property type="match status" value="1"/>
</dbReference>
<dbReference type="Pfam" id="PF00118">
    <property type="entry name" value="Cpn60_TCP1"/>
    <property type="match status" value="1"/>
</dbReference>
<dbReference type="PRINTS" id="PR00298">
    <property type="entry name" value="CHAPERONIN60"/>
</dbReference>
<dbReference type="SUPFAM" id="SSF52029">
    <property type="entry name" value="GroEL apical domain-like"/>
    <property type="match status" value="1"/>
</dbReference>
<dbReference type="SUPFAM" id="SSF48592">
    <property type="entry name" value="GroEL equatorial domain-like"/>
    <property type="match status" value="1"/>
</dbReference>
<dbReference type="SUPFAM" id="SSF54849">
    <property type="entry name" value="GroEL-intermediate domain like"/>
    <property type="match status" value="1"/>
</dbReference>
<dbReference type="PROSITE" id="PS00296">
    <property type="entry name" value="CHAPERONINS_CPN60"/>
    <property type="match status" value="1"/>
</dbReference>
<reference key="1">
    <citation type="journal article" date="2000" name="DNA Res.">
        <title>Structural analysis of Arabidopsis thaliana chromosome 3. II. Sequence features of the 4,251,695 bp regions covered by 90 P1, TAC and BAC clones.</title>
        <authorList>
            <person name="Kaneko T."/>
            <person name="Katoh T."/>
            <person name="Sato S."/>
            <person name="Nakamura Y."/>
            <person name="Asamizu E."/>
            <person name="Tabata S."/>
        </authorList>
    </citation>
    <scope>NUCLEOTIDE SEQUENCE [LARGE SCALE GENOMIC DNA]</scope>
    <source>
        <strain>cv. Columbia</strain>
    </source>
</reference>
<reference key="2">
    <citation type="journal article" date="2017" name="Plant J.">
        <title>Araport11: a complete reannotation of the Arabidopsis thaliana reference genome.</title>
        <authorList>
            <person name="Cheng C.Y."/>
            <person name="Krishnakumar V."/>
            <person name="Chan A.P."/>
            <person name="Thibaud-Nissen F."/>
            <person name="Schobel S."/>
            <person name="Town C.D."/>
        </authorList>
    </citation>
    <scope>GENOME REANNOTATION</scope>
    <source>
        <strain>cv. Columbia</strain>
    </source>
</reference>
<reference key="3">
    <citation type="journal article" date="2008" name="J. Exp. Bot.">
        <title>Association of Rubisco activase with chaperonin-60beta: a possible mechanism for protecting photosynthesis during heat stress.</title>
        <authorList>
            <person name="Salvucci M.E."/>
        </authorList>
    </citation>
    <scope>FUNCTION</scope>
    <scope>PROTEIN SEQUENCE OF 51-64</scope>
    <scope>INTERACTION WITH RAB</scope>
</reference>
<reference key="4">
    <citation type="journal article" date="1993" name="Plant Physiol.">
        <title>Differential involvement of the circadian clock in the expression of genes required for ribulose-1,5-bisphosphate carboxylase/oxygenase synthesis, assembly, and activation in Arabidopsis thaliana.</title>
        <authorList>
            <person name="Pilgrim M.L."/>
            <person name="McClung C.R."/>
        </authorList>
    </citation>
    <scope>INDUCTION BY LIGHT</scope>
</reference>
<reference key="5">
    <citation type="journal article" date="1995" name="J. Biol. Chem.">
        <title>Functional characterization of the higher plant chloroplast chaperonins.</title>
        <authorList>
            <person name="Viitanen P.V."/>
            <person name="Schmidt M."/>
            <person name="Buchner J."/>
            <person name="Suzuki T."/>
            <person name="Vierling E."/>
            <person name="Dickson R."/>
            <person name="Lorimer G.H."/>
            <person name="Gatenby A."/>
            <person name="Soll J."/>
        </authorList>
    </citation>
    <scope>FUNCTION</scope>
    <scope>INTERACTION</scope>
</reference>
<reference key="6">
    <citation type="journal article" date="2001" name="Cell Stress Chaperones">
        <title>Arabidopsis thaliana type I and II chaperonins.</title>
        <authorList>
            <person name="Hill J.E."/>
            <person name="Hemmingsen S.M."/>
        </authorList>
    </citation>
    <scope>GENE FAMILY</scope>
    <scope>NOMENCLATURE</scope>
</reference>
<reference key="7">
    <citation type="journal article" date="2009" name="BMC Plant Biol.">
        <title>Plastid chaperonin proteins Cpn60 alpha and Cpn60 beta are required for plastid division in Arabidopsis thaliana.</title>
        <authorList>
            <person name="Suzuki K."/>
            <person name="Nakanishi H."/>
            <person name="Bower J."/>
            <person name="Yoder D.W."/>
            <person name="Osteryoung K.W."/>
            <person name="Miyagishima S.Y."/>
        </authorList>
    </citation>
    <scope>FUNCTION</scope>
    <scope>SUBCELLULAR LOCATION</scope>
    <scope>DISRUPTION PHENOTYPE</scope>
</reference>
<reference key="8">
    <citation type="journal article" date="2009" name="Cell Stress Chaperones">
        <title>Differential effects of co-chaperonin homologs on cpn60 oligomers.</title>
        <authorList>
            <person name="Bonshtien A.L."/>
            <person name="Parnas A."/>
            <person name="Sharkia R."/>
            <person name="Niv A."/>
            <person name="Mizrahi I."/>
            <person name="Azem A."/>
            <person name="Weiss C."/>
        </authorList>
    </citation>
    <scope>FUNCTION</scope>
    <scope>IDENTIFICATION IN CPN60 COMPLEX</scope>
</reference>
<reference key="9">
    <citation type="journal article" date="2009" name="Plant Physiol.">
        <title>Large-scale Arabidopsis phosphoproteome profiling reveals novel chloroplast kinase substrates and phosphorylation networks.</title>
        <authorList>
            <person name="Reiland S."/>
            <person name="Messerli G."/>
            <person name="Baerenfaller K."/>
            <person name="Gerrits B."/>
            <person name="Endler A."/>
            <person name="Grossmann J."/>
            <person name="Gruissem W."/>
            <person name="Baginsky S."/>
        </authorList>
    </citation>
    <scope>PHOSPHORYLATION [LARGE SCALE ANALYSIS] AT SER-474</scope>
    <scope>IDENTIFICATION BY MASS SPECTROMETRY [LARGE SCALE ANALYSIS]</scope>
</reference>
<reference key="10">
    <citation type="journal article" date="2011" name="PLoS Biol.">
        <title>A chaperonin subunit with unique structures is essential for folding of a specific substrate.</title>
        <authorList>
            <person name="Peng L."/>
            <person name="Fukao Y."/>
            <person name="Myouga F."/>
            <person name="Motohashi R."/>
            <person name="Shinozaki K."/>
            <person name="Shikanai T."/>
        </authorList>
    </citation>
    <scope>GENE FAMILY</scope>
    <scope>NOMENCLATURE</scope>
</reference>
<proteinExistence type="evidence at protein level"/>
<evidence type="ECO:0000250" key="1">
    <source>
        <dbReference type="UniProtKB" id="P21238"/>
    </source>
</evidence>
<evidence type="ECO:0000255" key="2"/>
<evidence type="ECO:0000269" key="3">
    <source>
    </source>
</evidence>
<evidence type="ECO:0000269" key="4">
    <source>
    </source>
</evidence>
<evidence type="ECO:0000269" key="5">
    <source>
    </source>
</evidence>
<evidence type="ECO:0000269" key="6">
    <source>
    </source>
</evidence>
<evidence type="ECO:0000269" key="7">
    <source ref="5"/>
</evidence>
<evidence type="ECO:0000305" key="8"/>
<evidence type="ECO:0007744" key="9">
    <source>
    </source>
</evidence>
<accession>Q9LJE4</accession>
<gene>
    <name type="primary">CPN60B2</name>
    <name type="synonym">Cpn60-B(2)</name>
    <name type="ordered locus">At3g13470</name>
    <name type="ORF">MRP15.11</name>
</gene>
<sequence length="596" mass="63342">MASTFTATSSLGSLLAPNAIKLSSATSISSSSFGRRHNVCVRRSRPAIVCAAKELHFNKDGTTIRKLQTGVNKLADLVGVTLGPKGRNVVLESKYGSPRIVNDGVTVAREVELEDPVENIGAKLVRQAAAKTNDLAGDGTTTSVVLAQGFIAEGVKVVAAGANPVLITRGIEKTAKALVNELKLMSKEVEDSELADVAAVSAGNNHEVGSMIAEAMSKVGRKGVVTLEEGKSAENNLYVVEGMQFDRGYISPYFVTDSEKMSVEYDNCKLLLVDKKVTNARDLVGVLEDAIRGGYPILIIAEDIEQEALATLVVNKLRGTLKIAALKAPGFGERKSQYLDDIAILTGATVIREEVGLSLDKAGKEVLGNASKVVLTKEMTTIVGDGTTQEAVNKRVVQIRNLIEQAEQDYEKEKLNERIAKLSGGVAVIQVGAQTETELKEKKLRVEDALNATKAAVEEGIVVGGGCTLLRLASKVDAIKDTLENDEEKVGAEIVKRALSYPLKLIAKNAGVNGSVVSEKVLANDNVKFGYNAATGKYEDLMAAGIIDPTKVVRCCLEHAASVAKTFLMSDCVVVEIPEPEPVPAGNPMDNSGYGY</sequence>
<name>CPNB2_ARATH</name>
<keyword id="KW-0067">ATP-binding</keyword>
<keyword id="KW-0143">Chaperone</keyword>
<keyword id="KW-0150">Chloroplast</keyword>
<keyword id="KW-0175">Coiled coil</keyword>
<keyword id="KW-0903">Direct protein sequencing</keyword>
<keyword id="KW-0547">Nucleotide-binding</keyword>
<keyword id="KW-0597">Phosphoprotein</keyword>
<keyword id="KW-0934">Plastid</keyword>
<keyword id="KW-1185">Reference proteome</keyword>
<keyword id="KW-0809">Transit peptide</keyword>